<dbReference type="EC" id="6.3.2.3" evidence="2"/>
<dbReference type="EMBL" id="AL513382">
    <property type="protein sequence ID" value="CAD02919.1"/>
    <property type="molecule type" value="Genomic_DNA"/>
</dbReference>
<dbReference type="EMBL" id="AE014613">
    <property type="protein sequence ID" value="AAO70559.1"/>
    <property type="molecule type" value="Genomic_DNA"/>
</dbReference>
<dbReference type="RefSeq" id="NP_457487.1">
    <property type="nucleotide sequence ID" value="NC_003198.1"/>
</dbReference>
<dbReference type="RefSeq" id="WP_000593242.1">
    <property type="nucleotide sequence ID" value="NZ_WSUR01000049.1"/>
</dbReference>
<dbReference type="SMR" id="P58581"/>
<dbReference type="STRING" id="220341.gene:17587121"/>
<dbReference type="KEGG" id="stt:t3007"/>
<dbReference type="KEGG" id="sty:STY3248"/>
<dbReference type="PATRIC" id="fig|220341.7.peg.3312"/>
<dbReference type="eggNOG" id="COG0189">
    <property type="taxonomic scope" value="Bacteria"/>
</dbReference>
<dbReference type="HOGENOM" id="CLU_068239_0_0_6"/>
<dbReference type="OMA" id="IWMRKDP"/>
<dbReference type="OrthoDB" id="9785415at2"/>
<dbReference type="UniPathway" id="UPA00142">
    <property type="reaction ID" value="UER00210"/>
</dbReference>
<dbReference type="Proteomes" id="UP000000541">
    <property type="component" value="Chromosome"/>
</dbReference>
<dbReference type="Proteomes" id="UP000002670">
    <property type="component" value="Chromosome"/>
</dbReference>
<dbReference type="GO" id="GO:0005737">
    <property type="term" value="C:cytoplasm"/>
    <property type="evidence" value="ECO:0007669"/>
    <property type="project" value="TreeGrafter"/>
</dbReference>
<dbReference type="GO" id="GO:0005524">
    <property type="term" value="F:ATP binding"/>
    <property type="evidence" value="ECO:0007669"/>
    <property type="project" value="UniProtKB-UniRule"/>
</dbReference>
<dbReference type="GO" id="GO:0004363">
    <property type="term" value="F:glutathione synthase activity"/>
    <property type="evidence" value="ECO:0007669"/>
    <property type="project" value="UniProtKB-UniRule"/>
</dbReference>
<dbReference type="GO" id="GO:0046872">
    <property type="term" value="F:metal ion binding"/>
    <property type="evidence" value="ECO:0007669"/>
    <property type="project" value="UniProtKB-KW"/>
</dbReference>
<dbReference type="FunFam" id="3.30.1490.20:FF:000009">
    <property type="entry name" value="Glutathione synthetase"/>
    <property type="match status" value="1"/>
</dbReference>
<dbReference type="FunFam" id="3.30.470.20:FF:000010">
    <property type="entry name" value="Glutathione synthetase"/>
    <property type="match status" value="1"/>
</dbReference>
<dbReference type="FunFam" id="3.40.50.20:FF:000009">
    <property type="entry name" value="Glutathione synthetase"/>
    <property type="match status" value="1"/>
</dbReference>
<dbReference type="Gene3D" id="3.40.50.20">
    <property type="match status" value="1"/>
</dbReference>
<dbReference type="Gene3D" id="3.30.1490.20">
    <property type="entry name" value="ATP-grasp fold, A domain"/>
    <property type="match status" value="1"/>
</dbReference>
<dbReference type="Gene3D" id="3.30.470.20">
    <property type="entry name" value="ATP-grasp fold, B domain"/>
    <property type="match status" value="1"/>
</dbReference>
<dbReference type="HAMAP" id="MF_00162">
    <property type="entry name" value="GSH_S"/>
    <property type="match status" value="1"/>
</dbReference>
<dbReference type="InterPro" id="IPR011761">
    <property type="entry name" value="ATP-grasp"/>
</dbReference>
<dbReference type="InterPro" id="IPR013815">
    <property type="entry name" value="ATP_grasp_subdomain_1"/>
</dbReference>
<dbReference type="InterPro" id="IPR006284">
    <property type="entry name" value="Glut_synth_pro"/>
</dbReference>
<dbReference type="InterPro" id="IPR004218">
    <property type="entry name" value="GSHS_ATP-bd"/>
</dbReference>
<dbReference type="InterPro" id="IPR004215">
    <property type="entry name" value="GSHS_N"/>
</dbReference>
<dbReference type="InterPro" id="IPR016185">
    <property type="entry name" value="PreATP-grasp_dom_sf"/>
</dbReference>
<dbReference type="NCBIfam" id="TIGR01380">
    <property type="entry name" value="glut_syn"/>
    <property type="match status" value="1"/>
</dbReference>
<dbReference type="NCBIfam" id="NF003573">
    <property type="entry name" value="PRK05246.1"/>
    <property type="match status" value="1"/>
</dbReference>
<dbReference type="PANTHER" id="PTHR21621:SF4">
    <property type="entry name" value="GLUTATHIONE SYNTHETASE"/>
    <property type="match status" value="1"/>
</dbReference>
<dbReference type="PANTHER" id="PTHR21621">
    <property type="entry name" value="RIBOSOMAL PROTEIN S6 MODIFICATION PROTEIN"/>
    <property type="match status" value="1"/>
</dbReference>
<dbReference type="Pfam" id="PF02955">
    <property type="entry name" value="GSH-S_ATP"/>
    <property type="match status" value="1"/>
</dbReference>
<dbReference type="Pfam" id="PF02951">
    <property type="entry name" value="GSH-S_N"/>
    <property type="match status" value="1"/>
</dbReference>
<dbReference type="SUPFAM" id="SSF56059">
    <property type="entry name" value="Glutathione synthetase ATP-binding domain-like"/>
    <property type="match status" value="1"/>
</dbReference>
<dbReference type="SUPFAM" id="SSF52440">
    <property type="entry name" value="PreATP-grasp domain"/>
    <property type="match status" value="1"/>
</dbReference>
<dbReference type="PROSITE" id="PS50975">
    <property type="entry name" value="ATP_GRASP"/>
    <property type="match status" value="1"/>
</dbReference>
<evidence type="ECO:0000250" key="1"/>
<evidence type="ECO:0000255" key="2">
    <source>
        <dbReference type="HAMAP-Rule" id="MF_00162"/>
    </source>
</evidence>
<sequence>MIKLGIVMDPIAHINIKKDTSFAMLLEAQRRGYELHYMEMADLYLINGEARACTRTLSVEQNYDKWYEFGSEQEIKLADLDVILMRKDPPFDTEFIYATYILERAEEEGTLIVNKPQSLRDCNEKLYTAWFADLTPETLVTRNKAQLKAFWEKHGDIIMKPLDGMGGASIFRVKEGDPNIGVIAETLTELGNRYCMAQNYLPAIKDGDKRVLVVDGEPVPYCLARIPQGGETRGNLAAGGRGEPRPLSESDWEIARRVGPTLKAKGLIFVGLDIIGDRLTEINVTSPTCVREIEAEYPISITGMLMDAIEARLAK</sequence>
<gene>
    <name evidence="2" type="primary">gshB</name>
    <name type="ordered locus">STY3248</name>
    <name type="ordered locus">t3007</name>
</gene>
<comment type="catalytic activity">
    <reaction evidence="2">
        <text>gamma-L-glutamyl-L-cysteine + glycine + ATP = glutathione + ADP + phosphate + H(+)</text>
        <dbReference type="Rhea" id="RHEA:13557"/>
        <dbReference type="ChEBI" id="CHEBI:15378"/>
        <dbReference type="ChEBI" id="CHEBI:30616"/>
        <dbReference type="ChEBI" id="CHEBI:43474"/>
        <dbReference type="ChEBI" id="CHEBI:57305"/>
        <dbReference type="ChEBI" id="CHEBI:57925"/>
        <dbReference type="ChEBI" id="CHEBI:58173"/>
        <dbReference type="ChEBI" id="CHEBI:456216"/>
        <dbReference type="EC" id="6.3.2.3"/>
    </reaction>
</comment>
<comment type="cofactor">
    <cofactor evidence="1">
        <name>Mg(2+)</name>
        <dbReference type="ChEBI" id="CHEBI:18420"/>
    </cofactor>
    <cofactor evidence="1">
        <name>Mn(2+)</name>
        <dbReference type="ChEBI" id="CHEBI:29035"/>
    </cofactor>
    <text evidence="1">Binds 1 Mg(2+) or Mn(2+) ion per subunit.</text>
</comment>
<comment type="pathway">
    <text evidence="2">Sulfur metabolism; glutathione biosynthesis; glutathione from L-cysteine and L-glutamate: step 2/2.</text>
</comment>
<comment type="similarity">
    <text evidence="2">Belongs to the prokaryotic GSH synthase family.</text>
</comment>
<proteinExistence type="inferred from homology"/>
<keyword id="KW-0067">ATP-binding</keyword>
<keyword id="KW-0317">Glutathione biosynthesis</keyword>
<keyword id="KW-0436">Ligase</keyword>
<keyword id="KW-0460">Magnesium</keyword>
<keyword id="KW-0464">Manganese</keyword>
<keyword id="KW-0479">Metal-binding</keyword>
<keyword id="KW-0547">Nucleotide-binding</keyword>
<reference key="1">
    <citation type="journal article" date="2001" name="Nature">
        <title>Complete genome sequence of a multiple drug resistant Salmonella enterica serovar Typhi CT18.</title>
        <authorList>
            <person name="Parkhill J."/>
            <person name="Dougan G."/>
            <person name="James K.D."/>
            <person name="Thomson N.R."/>
            <person name="Pickard D."/>
            <person name="Wain J."/>
            <person name="Churcher C.M."/>
            <person name="Mungall K.L."/>
            <person name="Bentley S.D."/>
            <person name="Holden M.T.G."/>
            <person name="Sebaihia M."/>
            <person name="Baker S."/>
            <person name="Basham D."/>
            <person name="Brooks K."/>
            <person name="Chillingworth T."/>
            <person name="Connerton P."/>
            <person name="Cronin A."/>
            <person name="Davis P."/>
            <person name="Davies R.M."/>
            <person name="Dowd L."/>
            <person name="White N."/>
            <person name="Farrar J."/>
            <person name="Feltwell T."/>
            <person name="Hamlin N."/>
            <person name="Haque A."/>
            <person name="Hien T.T."/>
            <person name="Holroyd S."/>
            <person name="Jagels K."/>
            <person name="Krogh A."/>
            <person name="Larsen T.S."/>
            <person name="Leather S."/>
            <person name="Moule S."/>
            <person name="O'Gaora P."/>
            <person name="Parry C."/>
            <person name="Quail M.A."/>
            <person name="Rutherford K.M."/>
            <person name="Simmonds M."/>
            <person name="Skelton J."/>
            <person name="Stevens K."/>
            <person name="Whitehead S."/>
            <person name="Barrell B.G."/>
        </authorList>
    </citation>
    <scope>NUCLEOTIDE SEQUENCE [LARGE SCALE GENOMIC DNA]</scope>
    <source>
        <strain>CT18</strain>
    </source>
</reference>
<reference key="2">
    <citation type="journal article" date="2003" name="J. Bacteriol.">
        <title>Comparative genomics of Salmonella enterica serovar Typhi strains Ty2 and CT18.</title>
        <authorList>
            <person name="Deng W."/>
            <person name="Liou S.-R."/>
            <person name="Plunkett G. III"/>
            <person name="Mayhew G.F."/>
            <person name="Rose D.J."/>
            <person name="Burland V."/>
            <person name="Kodoyianni V."/>
            <person name="Schwartz D.C."/>
            <person name="Blattner F.R."/>
        </authorList>
    </citation>
    <scope>NUCLEOTIDE SEQUENCE [LARGE SCALE GENOMIC DNA]</scope>
    <source>
        <strain>ATCC 700931 / Ty2</strain>
    </source>
</reference>
<feature type="chain" id="PRO_0000197483" description="Glutathione synthetase">
    <location>
        <begin position="1"/>
        <end position="315"/>
    </location>
</feature>
<feature type="domain" description="ATP-grasp" evidence="2">
    <location>
        <begin position="125"/>
        <end position="310"/>
    </location>
</feature>
<feature type="binding site" evidence="2">
    <location>
        <begin position="151"/>
        <end position="207"/>
    </location>
    <ligand>
        <name>ATP</name>
        <dbReference type="ChEBI" id="CHEBI:30616"/>
    </ligand>
</feature>
<feature type="binding site" evidence="2">
    <location>
        <position position="281"/>
    </location>
    <ligand>
        <name>Mg(2+)</name>
        <dbReference type="ChEBI" id="CHEBI:18420"/>
    </ligand>
</feature>
<feature type="binding site" evidence="2">
    <location>
        <position position="283"/>
    </location>
    <ligand>
        <name>Mg(2+)</name>
        <dbReference type="ChEBI" id="CHEBI:18420"/>
    </ligand>
</feature>
<protein>
    <recommendedName>
        <fullName evidence="2">Glutathione synthetase</fullName>
        <ecNumber evidence="2">6.3.2.3</ecNumber>
    </recommendedName>
    <alternativeName>
        <fullName evidence="2">GSH synthetase</fullName>
        <shortName evidence="2">GSH-S</shortName>
        <shortName evidence="2">GSHase</shortName>
    </alternativeName>
    <alternativeName>
        <fullName evidence="2">Glutathione synthase</fullName>
    </alternativeName>
</protein>
<name>GSHB_SALTI</name>
<organism>
    <name type="scientific">Salmonella typhi</name>
    <dbReference type="NCBI Taxonomy" id="90370"/>
    <lineage>
        <taxon>Bacteria</taxon>
        <taxon>Pseudomonadati</taxon>
        <taxon>Pseudomonadota</taxon>
        <taxon>Gammaproteobacteria</taxon>
        <taxon>Enterobacterales</taxon>
        <taxon>Enterobacteriaceae</taxon>
        <taxon>Salmonella</taxon>
    </lineage>
</organism>
<accession>P58581</accession>